<protein>
    <recommendedName>
        <fullName>Uncharacterized protein Rv0959</fullName>
    </recommendedName>
</protein>
<gene>
    <name type="ordered locus">Rv0959</name>
    <name type="ORF">MTCY10D7.15c</name>
</gene>
<keyword id="KW-1185">Reference proteome</keyword>
<reference key="1">
    <citation type="journal article" date="1998" name="Nature">
        <title>Deciphering the biology of Mycobacterium tuberculosis from the complete genome sequence.</title>
        <authorList>
            <person name="Cole S.T."/>
            <person name="Brosch R."/>
            <person name="Parkhill J."/>
            <person name="Garnier T."/>
            <person name="Churcher C.M."/>
            <person name="Harris D.E."/>
            <person name="Gordon S.V."/>
            <person name="Eiglmeier K."/>
            <person name="Gas S."/>
            <person name="Barry C.E. III"/>
            <person name="Tekaia F."/>
            <person name="Badcock K."/>
            <person name="Basham D."/>
            <person name="Brown D."/>
            <person name="Chillingworth T."/>
            <person name="Connor R."/>
            <person name="Davies R.M."/>
            <person name="Devlin K."/>
            <person name="Feltwell T."/>
            <person name="Gentles S."/>
            <person name="Hamlin N."/>
            <person name="Holroyd S."/>
            <person name="Hornsby T."/>
            <person name="Jagels K."/>
            <person name="Krogh A."/>
            <person name="McLean J."/>
            <person name="Moule S."/>
            <person name="Murphy L.D."/>
            <person name="Oliver S."/>
            <person name="Osborne J."/>
            <person name="Quail M.A."/>
            <person name="Rajandream M.A."/>
            <person name="Rogers J."/>
            <person name="Rutter S."/>
            <person name="Seeger K."/>
            <person name="Skelton S."/>
            <person name="Squares S."/>
            <person name="Squares R."/>
            <person name="Sulston J.E."/>
            <person name="Taylor K."/>
            <person name="Whitehead S."/>
            <person name="Barrell B.G."/>
        </authorList>
    </citation>
    <scope>NUCLEOTIDE SEQUENCE [LARGE SCALE GENOMIC DNA]</scope>
    <source>
        <strain>ATCC 25618 / H37Rv</strain>
    </source>
</reference>
<reference key="2">
    <citation type="journal article" date="2011" name="Mol. Cell. Proteomics">
        <title>Proteogenomic analysis of Mycobacterium tuberculosis by high resolution mass spectrometry.</title>
        <authorList>
            <person name="Kelkar D.S."/>
            <person name="Kumar D."/>
            <person name="Kumar P."/>
            <person name="Balakrishnan L."/>
            <person name="Muthusamy B."/>
            <person name="Yadav A.K."/>
            <person name="Shrivastava P."/>
            <person name="Marimuthu A."/>
            <person name="Anand S."/>
            <person name="Sundaram H."/>
            <person name="Kingsbury R."/>
            <person name="Harsha H.C."/>
            <person name="Nair B."/>
            <person name="Prasad T.S."/>
            <person name="Chauhan D.S."/>
            <person name="Katoch K."/>
            <person name="Katoch V.M."/>
            <person name="Kumar P."/>
            <person name="Chaerkady R."/>
            <person name="Ramachandran S."/>
            <person name="Dash D."/>
            <person name="Pandey A."/>
        </authorList>
    </citation>
    <scope>IDENTIFICATION BY MASS SPECTROMETRY [LARGE SCALE ANALYSIS]</scope>
    <source>
        <strain>ATCC 25618 / H37Rv</strain>
    </source>
</reference>
<sequence length="672" mass="74636">MAKSDGDDPLRPASPRLRSSRRHSLRYSAYTGGPDPLAPPVDLRDALEQIGQDVMAGASPRRALSELLRRGTRNLTGADRLAAEVNRRRRELLRRNNLDGTLQEIKKLLDEAVLAERKELARALDDDARFAELQLDALPASPAKAVQELAEYRWRSGQAREKYEQIKDLLGRELLDQRFAGMKQALAGATDDDRRRVTEMLDDLNDLLDKHARGEDTQRDFDEFMTKHGEFFPENPRNVEELLDSLAKRAAAAQRFRNSLSQEQRDELDALAQQAFGSPALMRALDRLDAHLQAARPGEDWTGSQQFSGDNPFGMGEGTQALADIAELEQLAEQLSQSYPGASMDDVDLDALARQLGDQAAVDARTLAELERALVNQGFLDRGSDGQWRLSPKAMRRLGETALRDVAQQLSGRHGERDHRRAGAAGELTGATRPWQFGDTEPWHVARTLTNAVLRQAAAVHDRIRITVEDVEVAETETRTQAAVALLVDTSFSMVMENRWLPMKRTALALHHLVCTRFRSDALQIIAFGRYARTVTAAELTGLAGVYEQGTNLHHALALAGRHLRRHAGAQPVVLVVTDGEPTAHLEDFDGDGTSVFFDYPPHPRTIAHTVRGFDDMARLGAQVTIFRLGSDPGLARFIDQVARRVQGRVVVPDLDGLGAAVVGDYLRFRRR</sequence>
<evidence type="ECO:0000256" key="1">
    <source>
        <dbReference type="SAM" id="MobiDB-lite"/>
    </source>
</evidence>
<dbReference type="EMBL" id="AL123456">
    <property type="protein sequence ID" value="CCP43707.1"/>
    <property type="molecule type" value="Genomic_DNA"/>
</dbReference>
<dbReference type="PIR" id="E70717">
    <property type="entry name" value="E70717"/>
</dbReference>
<dbReference type="RefSeq" id="NP_215474.1">
    <property type="nucleotide sequence ID" value="NC_000962.3"/>
</dbReference>
<dbReference type="RefSeq" id="WP_003404895.1">
    <property type="nucleotide sequence ID" value="NZ_NVQJ01000001.1"/>
</dbReference>
<dbReference type="SMR" id="P9WKN1"/>
<dbReference type="STRING" id="83332.Rv0959"/>
<dbReference type="PaxDb" id="83332-Rv0959"/>
<dbReference type="GeneID" id="885329"/>
<dbReference type="KEGG" id="mtu:Rv0959"/>
<dbReference type="KEGG" id="mtv:RVBD_0959"/>
<dbReference type="PATRIC" id="fig|83332.111.peg.1064"/>
<dbReference type="TubercuList" id="Rv0959"/>
<dbReference type="eggNOG" id="COG4867">
    <property type="taxonomic scope" value="Bacteria"/>
</dbReference>
<dbReference type="InParanoid" id="P9WKN1"/>
<dbReference type="OrthoDB" id="9766126at2"/>
<dbReference type="PhylomeDB" id="P9WKN1"/>
<dbReference type="Proteomes" id="UP000001584">
    <property type="component" value="Chromosome"/>
</dbReference>
<dbReference type="GO" id="GO:0005886">
    <property type="term" value="C:plasma membrane"/>
    <property type="evidence" value="ECO:0007005"/>
    <property type="project" value="MTBBASE"/>
</dbReference>
<dbReference type="CDD" id="cd00198">
    <property type="entry name" value="vWFA"/>
    <property type="match status" value="1"/>
</dbReference>
<dbReference type="FunFam" id="3.40.50.410:FF:000066">
    <property type="entry name" value="von Willebrand factor, type A"/>
    <property type="match status" value="1"/>
</dbReference>
<dbReference type="Gene3D" id="3.40.50.410">
    <property type="entry name" value="von Willebrand factor, type A domain"/>
    <property type="match status" value="1"/>
</dbReference>
<dbReference type="InterPro" id="IPR002035">
    <property type="entry name" value="VWF_A"/>
</dbReference>
<dbReference type="InterPro" id="IPR036465">
    <property type="entry name" value="vWFA_dom_sf"/>
</dbReference>
<dbReference type="SMART" id="SM00327">
    <property type="entry name" value="VWA"/>
    <property type="match status" value="1"/>
</dbReference>
<dbReference type="SUPFAM" id="SSF53300">
    <property type="entry name" value="vWA-like"/>
    <property type="match status" value="1"/>
</dbReference>
<proteinExistence type="evidence at protein level"/>
<organism>
    <name type="scientific">Mycobacterium tuberculosis (strain ATCC 25618 / H37Rv)</name>
    <dbReference type="NCBI Taxonomy" id="83332"/>
    <lineage>
        <taxon>Bacteria</taxon>
        <taxon>Bacillati</taxon>
        <taxon>Actinomycetota</taxon>
        <taxon>Actinomycetes</taxon>
        <taxon>Mycobacteriales</taxon>
        <taxon>Mycobacteriaceae</taxon>
        <taxon>Mycobacterium</taxon>
        <taxon>Mycobacterium tuberculosis complex</taxon>
    </lineage>
</organism>
<feature type="chain" id="PRO_0000103753" description="Uncharacterized protein Rv0959">
    <location>
        <begin position="1"/>
        <end position="672"/>
    </location>
</feature>
<feature type="region of interest" description="Disordered" evidence="1">
    <location>
        <begin position="1"/>
        <end position="41"/>
    </location>
</feature>
<feature type="compositionally biased region" description="Basic and acidic residues" evidence="1">
    <location>
        <begin position="1"/>
        <end position="10"/>
    </location>
</feature>
<accession>P9WKN1</accession>
<accession>L0T880</accession>
<accession>P0A5D7</accession>
<accession>P71551</accession>
<name>Y959_MYCTU</name>